<accession>Q4V7D7</accession>
<gene>
    <name type="primary">Rbm22</name>
</gene>
<keyword id="KW-0007">Acetylation</keyword>
<keyword id="KW-0963">Cytoplasm</keyword>
<keyword id="KW-1017">Isopeptide bond</keyword>
<keyword id="KW-0479">Metal-binding</keyword>
<keyword id="KW-0507">mRNA processing</keyword>
<keyword id="KW-0508">mRNA splicing</keyword>
<keyword id="KW-0539">Nucleus</keyword>
<keyword id="KW-0597">Phosphoprotein</keyword>
<keyword id="KW-1185">Reference proteome</keyword>
<keyword id="KW-0694">RNA-binding</keyword>
<keyword id="KW-0747">Spliceosome</keyword>
<keyword id="KW-0813">Transport</keyword>
<keyword id="KW-0832">Ubl conjugation</keyword>
<keyword id="KW-0862">Zinc</keyword>
<keyword id="KW-0863">Zinc-finger</keyword>
<proteinExistence type="evidence at transcript level"/>
<comment type="function">
    <text evidence="2">Required for pre-mRNA splicing as component of the activated spliceosome. Involved in the first step of pre-mRNA splicing. Binds directly to the internal stem-loop (ISL) domain of the U6 snRNA and to the pre-mRNA intron near the 5' splice site during the activation and catalytic phases of the spliceosome cycle. Involved in both translocations of the nuclear SLU7 to the cytoplasm and the cytosolic calcium-binding protein PDCD6 to the nucleus upon cellular stress responses.</text>
</comment>
<comment type="subunit">
    <text evidence="2">Component of the pre-catalytic and catalytic spliceosome complexes. Component of the postcatalytic spliceosome P complex. Interacts with PDCD6; the interaction induces translocation of PDCD6 in the cytoplasm. Interacts with PPIL1 (By similarity).</text>
</comment>
<comment type="subcellular location">
    <subcellularLocation>
        <location evidence="2">Nucleus</location>
    </subcellularLocation>
    <subcellularLocation>
        <location evidence="2">Cytoplasm</location>
    </subcellularLocation>
    <text evidence="2">Nearly exclusively nuclear. Translocated from the nucleus to the cytoplasm after heat shock cell treatment. May be shuttling between the nucleus and the cytosol.</text>
</comment>
<comment type="domain">
    <text evidence="1">The C-terminal RRM domain and the zinc finger motif are necessary for RNA-binding.</text>
</comment>
<comment type="similarity">
    <text evidence="6">Belongs to the SLT11 family.</text>
</comment>
<name>RBM22_RAT</name>
<reference key="1">
    <citation type="journal article" date="2004" name="Genome Res.">
        <title>The status, quality, and expansion of the NIH full-length cDNA project: the Mammalian Gene Collection (MGC).</title>
        <authorList>
            <consortium name="The MGC Project Team"/>
        </authorList>
    </citation>
    <scope>NUCLEOTIDE SEQUENCE [LARGE SCALE MRNA]</scope>
    <source>
        <tissue>Placenta</tissue>
    </source>
</reference>
<feature type="initiator methionine" description="Removed" evidence="2">
    <location>
        <position position="1"/>
    </location>
</feature>
<feature type="chain" id="PRO_0000250549" description="Pre-mRNA-splicing factor RBM22">
    <location>
        <begin position="2"/>
        <end position="420"/>
    </location>
</feature>
<feature type="domain" description="RRM" evidence="3">
    <location>
        <begin position="232"/>
        <end position="305"/>
    </location>
</feature>
<feature type="zinc finger region" description="C3H1-type" evidence="4">
    <location>
        <begin position="159"/>
        <end position="186"/>
    </location>
</feature>
<feature type="region of interest" description="Disordered" evidence="5">
    <location>
        <begin position="303"/>
        <end position="343"/>
    </location>
</feature>
<feature type="region of interest" description="Disordered" evidence="5">
    <location>
        <begin position="371"/>
        <end position="420"/>
    </location>
</feature>
<feature type="compositionally biased region" description="Basic and acidic residues" evidence="5">
    <location>
        <begin position="309"/>
        <end position="318"/>
    </location>
</feature>
<feature type="modified residue" description="N-acetylalanine" evidence="2">
    <location>
        <position position="2"/>
    </location>
</feature>
<feature type="modified residue" description="Phosphoserine" evidence="2">
    <location>
        <position position="4"/>
    </location>
</feature>
<feature type="modified residue" description="Phosphoserine" evidence="2">
    <location>
        <position position="102"/>
    </location>
</feature>
<feature type="modified residue" description="N6-acetyllysine" evidence="2">
    <location>
        <position position="212"/>
    </location>
</feature>
<feature type="cross-link" description="Glycyl lysine isopeptide (Lys-Gly) (interchain with G-Cter in SUMO2)" evidence="2">
    <location>
        <position position="139"/>
    </location>
</feature>
<feature type="cross-link" description="Glycyl lysine isopeptide (Lys-Gly) (interchain with G-Cter in SUMO2)" evidence="2">
    <location>
        <position position="149"/>
    </location>
</feature>
<feature type="cross-link" description="Glycyl lysine isopeptide (Lys-Gly) (interchain with G-Cter in SUMO2)" evidence="2">
    <location>
        <position position="290"/>
    </location>
</feature>
<dbReference type="EMBL" id="BC097991">
    <property type="protein sequence ID" value="AAH97991.1"/>
    <property type="molecule type" value="mRNA"/>
</dbReference>
<dbReference type="RefSeq" id="NP_001020847.1">
    <property type="nucleotide sequence ID" value="NM_001025676.1"/>
</dbReference>
<dbReference type="SMR" id="Q4V7D7"/>
<dbReference type="FunCoup" id="Q4V7D7">
    <property type="interactions" value="4837"/>
</dbReference>
<dbReference type="STRING" id="10116.ENSRNOP00000026087"/>
<dbReference type="iPTMnet" id="Q4V7D7"/>
<dbReference type="PhosphoSitePlus" id="Q4V7D7"/>
<dbReference type="PaxDb" id="10116-ENSRNOP00000026087"/>
<dbReference type="Ensembl" id="ENSRNOT00000026087.4">
    <property type="protein sequence ID" value="ENSRNOP00000026087.2"/>
    <property type="gene ID" value="ENSRNOG00000019235.4"/>
</dbReference>
<dbReference type="GeneID" id="307410"/>
<dbReference type="KEGG" id="rno:307410"/>
<dbReference type="UCSC" id="RGD:1305770">
    <property type="organism name" value="rat"/>
</dbReference>
<dbReference type="AGR" id="RGD:1305770"/>
<dbReference type="CTD" id="55696"/>
<dbReference type="RGD" id="1305770">
    <property type="gene designation" value="Rbm22"/>
</dbReference>
<dbReference type="eggNOG" id="KOG0153">
    <property type="taxonomic scope" value="Eukaryota"/>
</dbReference>
<dbReference type="GeneTree" id="ENSGT00390000002792"/>
<dbReference type="HOGENOM" id="CLU_027112_3_0_1"/>
<dbReference type="InParanoid" id="Q4V7D7"/>
<dbReference type="OMA" id="CPLRVQW"/>
<dbReference type="OrthoDB" id="10259600at2759"/>
<dbReference type="PhylomeDB" id="Q4V7D7"/>
<dbReference type="TreeFam" id="TF314284"/>
<dbReference type="Reactome" id="R-RNO-72163">
    <property type="pathway name" value="mRNA Splicing - Major Pathway"/>
</dbReference>
<dbReference type="PRO" id="PR:Q4V7D7"/>
<dbReference type="Proteomes" id="UP000002494">
    <property type="component" value="Chromosome 18"/>
</dbReference>
<dbReference type="Bgee" id="ENSRNOG00000019235">
    <property type="expression patterns" value="Expressed in thymus and 19 other cell types or tissues"/>
</dbReference>
<dbReference type="GO" id="GO:0071013">
    <property type="term" value="C:catalytic step 2 spliceosome"/>
    <property type="evidence" value="ECO:0000266"/>
    <property type="project" value="RGD"/>
</dbReference>
<dbReference type="GO" id="GO:0005737">
    <property type="term" value="C:cytoplasm"/>
    <property type="evidence" value="ECO:0000250"/>
    <property type="project" value="UniProtKB"/>
</dbReference>
<dbReference type="GO" id="GO:0005654">
    <property type="term" value="C:nucleoplasm"/>
    <property type="evidence" value="ECO:0007669"/>
    <property type="project" value="Ensembl"/>
</dbReference>
<dbReference type="GO" id="GO:0005634">
    <property type="term" value="C:nucleus"/>
    <property type="evidence" value="ECO:0000250"/>
    <property type="project" value="UniProtKB"/>
</dbReference>
<dbReference type="GO" id="GO:0000974">
    <property type="term" value="C:Prp19 complex"/>
    <property type="evidence" value="ECO:0000318"/>
    <property type="project" value="GO_Central"/>
</dbReference>
<dbReference type="GO" id="GO:0071006">
    <property type="term" value="C:U2-type catalytic step 1 spliceosome"/>
    <property type="evidence" value="ECO:0000318"/>
    <property type="project" value="GO_Central"/>
</dbReference>
<dbReference type="GO" id="GO:0071007">
    <property type="term" value="C:U2-type catalytic step 2 spliceosome"/>
    <property type="evidence" value="ECO:0000266"/>
    <property type="project" value="RGD"/>
</dbReference>
<dbReference type="GO" id="GO:0048306">
    <property type="term" value="F:calcium-dependent protein binding"/>
    <property type="evidence" value="ECO:0000266"/>
    <property type="project" value="RGD"/>
</dbReference>
<dbReference type="GO" id="GO:0036002">
    <property type="term" value="F:pre-mRNA binding"/>
    <property type="evidence" value="ECO:0000250"/>
    <property type="project" value="UniProtKB"/>
</dbReference>
<dbReference type="GO" id="GO:0017070">
    <property type="term" value="F:U6 snRNA binding"/>
    <property type="evidence" value="ECO:0000250"/>
    <property type="project" value="UniProtKB"/>
</dbReference>
<dbReference type="GO" id="GO:0008270">
    <property type="term" value="F:zinc ion binding"/>
    <property type="evidence" value="ECO:0007669"/>
    <property type="project" value="UniProtKB-KW"/>
</dbReference>
<dbReference type="GO" id="GO:0071466">
    <property type="term" value="P:cellular response to xenobiotic stimulus"/>
    <property type="evidence" value="ECO:0000250"/>
    <property type="project" value="UniProtKB"/>
</dbReference>
<dbReference type="GO" id="GO:0045292">
    <property type="term" value="P:mRNA cis splicing, via spliceosome"/>
    <property type="evidence" value="ECO:0000250"/>
    <property type="project" value="UniProtKB"/>
</dbReference>
<dbReference type="GO" id="GO:0046827">
    <property type="term" value="P:positive regulation of protein export from nucleus"/>
    <property type="evidence" value="ECO:0000250"/>
    <property type="project" value="UniProtKB"/>
</dbReference>
<dbReference type="GO" id="GO:0042307">
    <property type="term" value="P:positive regulation of protein import into nucleus"/>
    <property type="evidence" value="ECO:0000250"/>
    <property type="project" value="UniProtKB"/>
</dbReference>
<dbReference type="GO" id="GO:0033120">
    <property type="term" value="P:positive regulation of RNA splicing"/>
    <property type="evidence" value="ECO:0000250"/>
    <property type="project" value="UniProtKB"/>
</dbReference>
<dbReference type="CDD" id="cd12224">
    <property type="entry name" value="RRM_RBM22"/>
    <property type="match status" value="1"/>
</dbReference>
<dbReference type="FunFam" id="3.30.70.330:FF:000137">
    <property type="entry name" value="pre-mRNA-splicing factor RBM22"/>
    <property type="match status" value="1"/>
</dbReference>
<dbReference type="FunFam" id="4.10.1000.10:FF:000006">
    <property type="entry name" value="Putative pre-mrna-splicing factor rbm22"/>
    <property type="match status" value="1"/>
</dbReference>
<dbReference type="Gene3D" id="3.30.70.330">
    <property type="match status" value="1"/>
</dbReference>
<dbReference type="Gene3D" id="4.10.1000.10">
    <property type="entry name" value="Zinc finger, CCCH-type"/>
    <property type="match status" value="1"/>
</dbReference>
<dbReference type="InterPro" id="IPR039171">
    <property type="entry name" value="Cwc2/Slt11"/>
</dbReference>
<dbReference type="InterPro" id="IPR012677">
    <property type="entry name" value="Nucleotide-bd_a/b_plait_sf"/>
</dbReference>
<dbReference type="InterPro" id="IPR035979">
    <property type="entry name" value="RBD_domain_sf"/>
</dbReference>
<dbReference type="InterPro" id="IPR000504">
    <property type="entry name" value="RRM_dom"/>
</dbReference>
<dbReference type="InterPro" id="IPR048995">
    <property type="entry name" value="STL11/RBM22-like_N"/>
</dbReference>
<dbReference type="InterPro" id="IPR000571">
    <property type="entry name" value="Znf_CCCH"/>
</dbReference>
<dbReference type="InterPro" id="IPR036855">
    <property type="entry name" value="Znf_CCCH_sf"/>
</dbReference>
<dbReference type="PANTHER" id="PTHR14089">
    <property type="entry name" value="PRE-MRNA-SPLICING FACTOR RBM22"/>
    <property type="match status" value="1"/>
</dbReference>
<dbReference type="PANTHER" id="PTHR14089:SF18">
    <property type="entry name" value="PRE-MRNA-SPLICING FACTOR RBM22"/>
    <property type="match status" value="1"/>
</dbReference>
<dbReference type="Pfam" id="PF00076">
    <property type="entry name" value="RRM_1"/>
    <property type="match status" value="1"/>
</dbReference>
<dbReference type="Pfam" id="PF21369">
    <property type="entry name" value="STL11_N"/>
    <property type="match status" value="1"/>
</dbReference>
<dbReference type="SMART" id="SM00360">
    <property type="entry name" value="RRM"/>
    <property type="match status" value="1"/>
</dbReference>
<dbReference type="SMART" id="SM00356">
    <property type="entry name" value="ZnF_C3H1"/>
    <property type="match status" value="1"/>
</dbReference>
<dbReference type="SUPFAM" id="SSF90229">
    <property type="entry name" value="CCCH zinc finger"/>
    <property type="match status" value="1"/>
</dbReference>
<dbReference type="SUPFAM" id="SSF54928">
    <property type="entry name" value="RNA-binding domain, RBD"/>
    <property type="match status" value="1"/>
</dbReference>
<dbReference type="PROSITE" id="PS50102">
    <property type="entry name" value="RRM"/>
    <property type="match status" value="1"/>
</dbReference>
<dbReference type="PROSITE" id="PS50103">
    <property type="entry name" value="ZF_C3H1"/>
    <property type="match status" value="1"/>
</dbReference>
<protein>
    <recommendedName>
        <fullName>Pre-mRNA-splicing factor RBM22</fullName>
    </recommendedName>
    <alternativeName>
        <fullName>RNA-binding motif protein 22</fullName>
    </alternativeName>
</protein>
<sequence length="420" mass="46864">MATSLGSNTYNRQNWEDADFPILCQTCLGENPYIRMTKEKYGKECKICARPFTVFRWCPGVRMRFKKTEVCQTCSKLKNVCQTCLLDLEYGLPIQVRDAGLSFKDDMPKSDVNKEYYTQNMEREISNSDGTRPVGMLGKATSTSDMLLKLARTTPYYKRNRPHICSFWVKGECKRGEECPYRHEKPTDPDDPLADQNIKDRYYGINDPVADKLLKRASTMPRLDPPEDKTITTLYVGGLGDTITETDLRNHFYQFGEIRTVTVVQRQQCAFIQFATRQAAEVAAEKSFNKLIVNGRRLNVKWGRSQAARGKEKEKDGTTDSGIKLEPVPGLPGALPPPPAAEEEASANYFNLPPSGPPAVVNIALPPPPGIAPPPPPGFGPHLFHPMGPPPPFMRAPGPIHYPSQDPQRMGAHAGKHSSP</sequence>
<evidence type="ECO:0000250" key="1"/>
<evidence type="ECO:0000250" key="2">
    <source>
        <dbReference type="UniProtKB" id="Q9NW64"/>
    </source>
</evidence>
<evidence type="ECO:0000255" key="3">
    <source>
        <dbReference type="PROSITE-ProRule" id="PRU00176"/>
    </source>
</evidence>
<evidence type="ECO:0000255" key="4">
    <source>
        <dbReference type="PROSITE-ProRule" id="PRU00723"/>
    </source>
</evidence>
<evidence type="ECO:0000256" key="5">
    <source>
        <dbReference type="SAM" id="MobiDB-lite"/>
    </source>
</evidence>
<evidence type="ECO:0000305" key="6"/>
<organism>
    <name type="scientific">Rattus norvegicus</name>
    <name type="common">Rat</name>
    <dbReference type="NCBI Taxonomy" id="10116"/>
    <lineage>
        <taxon>Eukaryota</taxon>
        <taxon>Metazoa</taxon>
        <taxon>Chordata</taxon>
        <taxon>Craniata</taxon>
        <taxon>Vertebrata</taxon>
        <taxon>Euteleostomi</taxon>
        <taxon>Mammalia</taxon>
        <taxon>Eutheria</taxon>
        <taxon>Euarchontoglires</taxon>
        <taxon>Glires</taxon>
        <taxon>Rodentia</taxon>
        <taxon>Myomorpha</taxon>
        <taxon>Muroidea</taxon>
        <taxon>Muridae</taxon>
        <taxon>Murinae</taxon>
        <taxon>Rattus</taxon>
    </lineage>
</organism>